<organism>
    <name type="scientific">Actinobacillus succinogenes (strain ATCC 55618 / DSM 22257 / CCUG 43843 / 130Z)</name>
    <dbReference type="NCBI Taxonomy" id="339671"/>
    <lineage>
        <taxon>Bacteria</taxon>
        <taxon>Pseudomonadati</taxon>
        <taxon>Pseudomonadota</taxon>
        <taxon>Gammaproteobacteria</taxon>
        <taxon>Pasteurellales</taxon>
        <taxon>Pasteurellaceae</taxon>
        <taxon>Actinobacillus</taxon>
    </lineage>
</organism>
<comment type="catalytic activity">
    <reaction evidence="1">
        <text>tRNA(Cys) + L-cysteine + ATP = L-cysteinyl-tRNA(Cys) + AMP + diphosphate</text>
        <dbReference type="Rhea" id="RHEA:17773"/>
        <dbReference type="Rhea" id="RHEA-COMP:9661"/>
        <dbReference type="Rhea" id="RHEA-COMP:9679"/>
        <dbReference type="ChEBI" id="CHEBI:30616"/>
        <dbReference type="ChEBI" id="CHEBI:33019"/>
        <dbReference type="ChEBI" id="CHEBI:35235"/>
        <dbReference type="ChEBI" id="CHEBI:78442"/>
        <dbReference type="ChEBI" id="CHEBI:78517"/>
        <dbReference type="ChEBI" id="CHEBI:456215"/>
        <dbReference type="EC" id="6.1.1.16"/>
    </reaction>
</comment>
<comment type="cofactor">
    <cofactor evidence="1">
        <name>Zn(2+)</name>
        <dbReference type="ChEBI" id="CHEBI:29105"/>
    </cofactor>
    <text evidence="1">Binds 1 zinc ion per subunit.</text>
</comment>
<comment type="subunit">
    <text evidence="1">Monomer.</text>
</comment>
<comment type="subcellular location">
    <subcellularLocation>
        <location evidence="1">Cytoplasm</location>
    </subcellularLocation>
</comment>
<comment type="similarity">
    <text evidence="1">Belongs to the class-I aminoacyl-tRNA synthetase family.</text>
</comment>
<reference key="1">
    <citation type="journal article" date="2010" name="BMC Genomics">
        <title>A genomic perspective on the potential of Actinobacillus succinogenes for industrial succinate production.</title>
        <authorList>
            <person name="McKinlay J.B."/>
            <person name="Laivenieks M."/>
            <person name="Schindler B.D."/>
            <person name="McKinlay A.A."/>
            <person name="Siddaramappa S."/>
            <person name="Challacombe J.F."/>
            <person name="Lowry S.R."/>
            <person name="Clum A."/>
            <person name="Lapidus A.L."/>
            <person name="Burkhart K.B."/>
            <person name="Harkins V."/>
            <person name="Vieille C."/>
        </authorList>
    </citation>
    <scope>NUCLEOTIDE SEQUENCE [LARGE SCALE GENOMIC DNA]</scope>
    <source>
        <strain>ATCC 55618 / DSM 22257 / CCUG 43843 / 130Z</strain>
    </source>
</reference>
<evidence type="ECO:0000255" key="1">
    <source>
        <dbReference type="HAMAP-Rule" id="MF_00041"/>
    </source>
</evidence>
<gene>
    <name evidence="1" type="primary">cysS</name>
    <name type="ordered locus">Asuc_1774</name>
</gene>
<keyword id="KW-0030">Aminoacyl-tRNA synthetase</keyword>
<keyword id="KW-0067">ATP-binding</keyword>
<keyword id="KW-0963">Cytoplasm</keyword>
<keyword id="KW-0436">Ligase</keyword>
<keyword id="KW-0479">Metal-binding</keyword>
<keyword id="KW-0547">Nucleotide-binding</keyword>
<keyword id="KW-0648">Protein biosynthesis</keyword>
<keyword id="KW-1185">Reference proteome</keyword>
<keyword id="KW-0862">Zinc</keyword>
<dbReference type="EC" id="6.1.1.16" evidence="1"/>
<dbReference type="EMBL" id="CP000746">
    <property type="protein sequence ID" value="ABR75126.1"/>
    <property type="molecule type" value="Genomic_DNA"/>
</dbReference>
<dbReference type="RefSeq" id="WP_012073503.1">
    <property type="nucleotide sequence ID" value="NC_009655.1"/>
</dbReference>
<dbReference type="SMR" id="A6VQ79"/>
<dbReference type="STRING" id="339671.Asuc_1774"/>
<dbReference type="KEGG" id="asu:Asuc_1774"/>
<dbReference type="eggNOG" id="COG0215">
    <property type="taxonomic scope" value="Bacteria"/>
</dbReference>
<dbReference type="HOGENOM" id="CLU_013528_0_1_6"/>
<dbReference type="OrthoDB" id="9815130at2"/>
<dbReference type="Proteomes" id="UP000001114">
    <property type="component" value="Chromosome"/>
</dbReference>
<dbReference type="GO" id="GO:0005829">
    <property type="term" value="C:cytosol"/>
    <property type="evidence" value="ECO:0007669"/>
    <property type="project" value="TreeGrafter"/>
</dbReference>
<dbReference type="GO" id="GO:0005524">
    <property type="term" value="F:ATP binding"/>
    <property type="evidence" value="ECO:0007669"/>
    <property type="project" value="UniProtKB-UniRule"/>
</dbReference>
<dbReference type="GO" id="GO:0004817">
    <property type="term" value="F:cysteine-tRNA ligase activity"/>
    <property type="evidence" value="ECO:0007669"/>
    <property type="project" value="UniProtKB-UniRule"/>
</dbReference>
<dbReference type="GO" id="GO:0008270">
    <property type="term" value="F:zinc ion binding"/>
    <property type="evidence" value="ECO:0007669"/>
    <property type="project" value="UniProtKB-UniRule"/>
</dbReference>
<dbReference type="GO" id="GO:0006423">
    <property type="term" value="P:cysteinyl-tRNA aminoacylation"/>
    <property type="evidence" value="ECO:0007669"/>
    <property type="project" value="UniProtKB-UniRule"/>
</dbReference>
<dbReference type="CDD" id="cd07963">
    <property type="entry name" value="Anticodon_Ia_Cys"/>
    <property type="match status" value="1"/>
</dbReference>
<dbReference type="CDD" id="cd00672">
    <property type="entry name" value="CysRS_core"/>
    <property type="match status" value="1"/>
</dbReference>
<dbReference type="FunFam" id="3.40.50.620:FF:000009">
    <property type="entry name" value="Cysteine--tRNA ligase"/>
    <property type="match status" value="1"/>
</dbReference>
<dbReference type="Gene3D" id="1.20.120.1910">
    <property type="entry name" value="Cysteine-tRNA ligase, C-terminal anti-codon recognition domain"/>
    <property type="match status" value="1"/>
</dbReference>
<dbReference type="Gene3D" id="3.40.50.620">
    <property type="entry name" value="HUPs"/>
    <property type="match status" value="1"/>
</dbReference>
<dbReference type="HAMAP" id="MF_00041">
    <property type="entry name" value="Cys_tRNA_synth"/>
    <property type="match status" value="1"/>
</dbReference>
<dbReference type="InterPro" id="IPR015803">
    <property type="entry name" value="Cys-tRNA-ligase"/>
</dbReference>
<dbReference type="InterPro" id="IPR015273">
    <property type="entry name" value="Cys-tRNA-synt_Ia_DALR"/>
</dbReference>
<dbReference type="InterPro" id="IPR024909">
    <property type="entry name" value="Cys-tRNA/MSH_ligase"/>
</dbReference>
<dbReference type="InterPro" id="IPR056411">
    <property type="entry name" value="CysS_C"/>
</dbReference>
<dbReference type="InterPro" id="IPR014729">
    <property type="entry name" value="Rossmann-like_a/b/a_fold"/>
</dbReference>
<dbReference type="InterPro" id="IPR032678">
    <property type="entry name" value="tRNA-synt_1_cat_dom"/>
</dbReference>
<dbReference type="InterPro" id="IPR009080">
    <property type="entry name" value="tRNAsynth_Ia_anticodon-bd"/>
</dbReference>
<dbReference type="NCBIfam" id="TIGR00435">
    <property type="entry name" value="cysS"/>
    <property type="match status" value="1"/>
</dbReference>
<dbReference type="PANTHER" id="PTHR10890:SF3">
    <property type="entry name" value="CYSTEINE--TRNA LIGASE, CYTOPLASMIC"/>
    <property type="match status" value="1"/>
</dbReference>
<dbReference type="PANTHER" id="PTHR10890">
    <property type="entry name" value="CYSTEINYL-TRNA SYNTHETASE"/>
    <property type="match status" value="1"/>
</dbReference>
<dbReference type="Pfam" id="PF23493">
    <property type="entry name" value="CysS_C"/>
    <property type="match status" value="1"/>
</dbReference>
<dbReference type="Pfam" id="PF09190">
    <property type="entry name" value="DALR_2"/>
    <property type="match status" value="1"/>
</dbReference>
<dbReference type="Pfam" id="PF01406">
    <property type="entry name" value="tRNA-synt_1e"/>
    <property type="match status" value="1"/>
</dbReference>
<dbReference type="PRINTS" id="PR00983">
    <property type="entry name" value="TRNASYNTHCYS"/>
</dbReference>
<dbReference type="SMART" id="SM00840">
    <property type="entry name" value="DALR_2"/>
    <property type="match status" value="1"/>
</dbReference>
<dbReference type="SUPFAM" id="SSF47323">
    <property type="entry name" value="Anticodon-binding domain of a subclass of class I aminoacyl-tRNA synthetases"/>
    <property type="match status" value="1"/>
</dbReference>
<dbReference type="SUPFAM" id="SSF52374">
    <property type="entry name" value="Nucleotidylyl transferase"/>
    <property type="match status" value="1"/>
</dbReference>
<feature type="chain" id="PRO_0000332782" description="Cysteine--tRNA ligase">
    <location>
        <begin position="1"/>
        <end position="459"/>
    </location>
</feature>
<feature type="short sequence motif" description="'HIGH' region">
    <location>
        <begin position="30"/>
        <end position="40"/>
    </location>
</feature>
<feature type="short sequence motif" description="'KMSKS' region">
    <location>
        <begin position="266"/>
        <end position="270"/>
    </location>
</feature>
<feature type="binding site" evidence="1">
    <location>
        <position position="28"/>
    </location>
    <ligand>
        <name>Zn(2+)</name>
        <dbReference type="ChEBI" id="CHEBI:29105"/>
    </ligand>
</feature>
<feature type="binding site" evidence="1">
    <location>
        <position position="209"/>
    </location>
    <ligand>
        <name>Zn(2+)</name>
        <dbReference type="ChEBI" id="CHEBI:29105"/>
    </ligand>
</feature>
<feature type="binding site" evidence="1">
    <location>
        <position position="234"/>
    </location>
    <ligand>
        <name>Zn(2+)</name>
        <dbReference type="ChEBI" id="CHEBI:29105"/>
    </ligand>
</feature>
<feature type="binding site" evidence="1">
    <location>
        <position position="238"/>
    </location>
    <ligand>
        <name>Zn(2+)</name>
        <dbReference type="ChEBI" id="CHEBI:29105"/>
    </ligand>
</feature>
<feature type="binding site" evidence="1">
    <location>
        <position position="269"/>
    </location>
    <ligand>
        <name>ATP</name>
        <dbReference type="ChEBI" id="CHEBI:30616"/>
    </ligand>
</feature>
<sequence length="459" mass="52162">MLKIFNTLTREKEEFKPINQNQVGMYVCGVTVYDLCHFGHGRTFVSFDVITRYLRFLGYNLRYVRNITDVDDKIIKRALENNETCDQLVERMIAEMHKDFDALNILRPDAEPRATKHIPEIIAMVDALLQRGHAYLAADGDVMFDVESFQKYGALSRQNLEQLQAGARVEIKSVKKNPMDFVLWKMSKPNEPSWDSPWGKGRPGWHIECSAMNSKELGNHFDIHGGGSDLMFPHHENEIAQSCCAHDGEYVNYWLHTGMLTINEEKMSKSLNNFFTIRDILTKYDAESVRYFFLTAQYRSLLDYSEENIGLARKALERLYTALRGCDWNSELPAQDQYVGAFKDAMDDDFNTPGALAVLFELAREINKLKAENPAQANHLAARLKHLAGVLGLLEQDPEAFLQGGAENEEVGKIEALIKQRNDARAEKNWAAADAARDALKEMGVVLEDGANGTSWRKL</sequence>
<protein>
    <recommendedName>
        <fullName evidence="1">Cysteine--tRNA ligase</fullName>
        <ecNumber evidence="1">6.1.1.16</ecNumber>
    </recommendedName>
    <alternativeName>
        <fullName evidence="1">Cysteinyl-tRNA synthetase</fullName>
        <shortName evidence="1">CysRS</shortName>
    </alternativeName>
</protein>
<name>SYC_ACTSZ</name>
<proteinExistence type="inferred from homology"/>
<accession>A6VQ79</accession>